<comment type="function">
    <text evidence="2 3 4 5 6 7">Regulates the expression of IL-2, IL-6, and other cytokines through regulation on NF-kappa-B activity. Functions in the regulation of inflammatory responses (PubMed:11931770, PubMed:15749903, PubMed:16410444, PubMed:16413922, PubMed:17641034). Involved in the induction of T helper 17 cells (Th17) differentiation upon recognition of antigen by T cell antigen receptor (TCR) (PubMed:25282160). According to PubMed:11931770, it may also regulate TCR-induced negative selection of thymocytes (PubMed:11931770).</text>
</comment>
<comment type="subunit">
    <text evidence="2">Interacts with NFKB1, RELA and RELB; in the nucleus.</text>
</comment>
<comment type="subcellular location">
    <subcellularLocation>
        <location evidence="2">Nucleus</location>
    </subcellularLocation>
</comment>
<comment type="tissue specificity">
    <text evidence="2 4">Specifically expressed in spleen and at low levels in thymus. Expressed in a population of antigen-presenting dendritic cells which may act as regulators of systemic inflammatory response.</text>
</comment>
<comment type="induction">
    <text evidence="2 3">Up-regulated in thymocytes upon TCR-triggered cell death (at protein level). Up-regulated by IL-10 or LPS.</text>
</comment>
<comment type="disruption phenotype">
    <text evidence="5 6">Mice are highly sensitive to LPS-induced endotoxin shock and susceptible to intestinal inflammation caused by exposure to microflora. They display no overt T-cell selection phenotype but an impaired proliferation of T-cells. Thymocytes and T-cells seem to produce less IL-2 and IFNG.</text>
</comment>
<comment type="similarity">
    <text evidence="8">Belongs to the NF-kappa-B inhibitor family.</text>
</comment>
<comment type="sequence caution" evidence="8">
    <conflict type="frameshift">
        <sequence resource="EMBL-CDS" id="BAE39455"/>
    </conflict>
</comment>
<organism>
    <name type="scientific">Mus musculus</name>
    <name type="common">Mouse</name>
    <dbReference type="NCBI Taxonomy" id="10090"/>
    <lineage>
        <taxon>Eukaryota</taxon>
        <taxon>Metazoa</taxon>
        <taxon>Chordata</taxon>
        <taxon>Craniata</taxon>
        <taxon>Vertebrata</taxon>
        <taxon>Euteleostomi</taxon>
        <taxon>Mammalia</taxon>
        <taxon>Eutheria</taxon>
        <taxon>Euarchontoglires</taxon>
        <taxon>Glires</taxon>
        <taxon>Rodentia</taxon>
        <taxon>Myomorpha</taxon>
        <taxon>Muroidea</taxon>
        <taxon>Muridae</taxon>
        <taxon>Murinae</taxon>
        <taxon>Mus</taxon>
        <taxon>Mus</taxon>
    </lineage>
</organism>
<gene>
    <name type="primary">Nfkbid</name>
    <name type="synonym">Ikbns</name>
</gene>
<feature type="chain" id="PRO_0000331115" description="NF-kappa-B inhibitor delta">
    <location>
        <begin position="1"/>
        <end position="327"/>
    </location>
</feature>
<feature type="repeat" description="ANK 1">
    <location>
        <begin position="62"/>
        <end position="97"/>
    </location>
</feature>
<feature type="repeat" description="ANK 2">
    <location>
        <begin position="98"/>
        <end position="127"/>
    </location>
</feature>
<feature type="repeat" description="ANK 3">
    <location>
        <begin position="131"/>
        <end position="160"/>
    </location>
</feature>
<feature type="repeat" description="ANK 4">
    <location>
        <begin position="166"/>
        <end position="215"/>
    </location>
</feature>
<feature type="repeat" description="ANK 5">
    <location>
        <begin position="220"/>
        <end position="250"/>
    </location>
</feature>
<feature type="repeat" description="ANK 6">
    <location>
        <begin position="257"/>
        <end position="290"/>
    </location>
</feature>
<feature type="region of interest" description="Disordered" evidence="1">
    <location>
        <begin position="1"/>
        <end position="40"/>
    </location>
</feature>
<feature type="region of interest" description="Disordered" evidence="1">
    <location>
        <begin position="293"/>
        <end position="327"/>
    </location>
</feature>
<feature type="compositionally biased region" description="Polar residues" evidence="1">
    <location>
        <begin position="14"/>
        <end position="23"/>
    </location>
</feature>
<feature type="sequence conflict" description="In Ref. 3; AAI10634." evidence="8" ref="3">
    <original>R</original>
    <variation>W</variation>
    <location>
        <position position="249"/>
    </location>
</feature>
<reference key="1">
    <citation type="journal article" date="2002" name="Mol. Cell">
        <title>Peptide-induced negative selection of thymocytes activates transcription of an NF-kappa B inhibitor.</title>
        <authorList>
            <person name="Fiorini E."/>
            <person name="Schmitz I."/>
            <person name="Marissen W.E."/>
            <person name="Osborn S.L."/>
            <person name="Touma M."/>
            <person name="Sasada T."/>
            <person name="Reche P.A."/>
            <person name="Tibaldi E.V."/>
            <person name="Hussey R.E."/>
            <person name="Kruisbeek A.M."/>
            <person name="Reinherz E.L."/>
            <person name="Clayton L.K."/>
        </authorList>
    </citation>
    <scope>NUCLEOTIDE SEQUENCE [MRNA]</scope>
    <scope>FUNCTION</scope>
    <scope>INTERACTION WITH NFKB1; RELA AND RELB</scope>
    <scope>SUBCELLULAR LOCATION</scope>
    <scope>TISSUE SPECIFICITY</scope>
    <scope>INDUCTION</scope>
    <source>
        <strain>C57BL/6J</strain>
        <tissue>Thymus</tissue>
    </source>
</reference>
<reference key="2">
    <citation type="journal article" date="2005" name="Science">
        <title>The transcriptional landscape of the mammalian genome.</title>
        <authorList>
            <person name="Carninci P."/>
            <person name="Kasukawa T."/>
            <person name="Katayama S."/>
            <person name="Gough J."/>
            <person name="Frith M.C."/>
            <person name="Maeda N."/>
            <person name="Oyama R."/>
            <person name="Ravasi T."/>
            <person name="Lenhard B."/>
            <person name="Wells C."/>
            <person name="Kodzius R."/>
            <person name="Shimokawa K."/>
            <person name="Bajic V.B."/>
            <person name="Brenner S.E."/>
            <person name="Batalov S."/>
            <person name="Forrest A.R."/>
            <person name="Zavolan M."/>
            <person name="Davis M.J."/>
            <person name="Wilming L.G."/>
            <person name="Aidinis V."/>
            <person name="Allen J.E."/>
            <person name="Ambesi-Impiombato A."/>
            <person name="Apweiler R."/>
            <person name="Aturaliya R.N."/>
            <person name="Bailey T.L."/>
            <person name="Bansal M."/>
            <person name="Baxter L."/>
            <person name="Beisel K.W."/>
            <person name="Bersano T."/>
            <person name="Bono H."/>
            <person name="Chalk A.M."/>
            <person name="Chiu K.P."/>
            <person name="Choudhary V."/>
            <person name="Christoffels A."/>
            <person name="Clutterbuck D.R."/>
            <person name="Crowe M.L."/>
            <person name="Dalla E."/>
            <person name="Dalrymple B.P."/>
            <person name="de Bono B."/>
            <person name="Della Gatta G."/>
            <person name="di Bernardo D."/>
            <person name="Down T."/>
            <person name="Engstrom P."/>
            <person name="Fagiolini M."/>
            <person name="Faulkner G."/>
            <person name="Fletcher C.F."/>
            <person name="Fukushima T."/>
            <person name="Furuno M."/>
            <person name="Futaki S."/>
            <person name="Gariboldi M."/>
            <person name="Georgii-Hemming P."/>
            <person name="Gingeras T.R."/>
            <person name="Gojobori T."/>
            <person name="Green R.E."/>
            <person name="Gustincich S."/>
            <person name="Harbers M."/>
            <person name="Hayashi Y."/>
            <person name="Hensch T.K."/>
            <person name="Hirokawa N."/>
            <person name="Hill D."/>
            <person name="Huminiecki L."/>
            <person name="Iacono M."/>
            <person name="Ikeo K."/>
            <person name="Iwama A."/>
            <person name="Ishikawa T."/>
            <person name="Jakt M."/>
            <person name="Kanapin A."/>
            <person name="Katoh M."/>
            <person name="Kawasawa Y."/>
            <person name="Kelso J."/>
            <person name="Kitamura H."/>
            <person name="Kitano H."/>
            <person name="Kollias G."/>
            <person name="Krishnan S.P."/>
            <person name="Kruger A."/>
            <person name="Kummerfeld S.K."/>
            <person name="Kurochkin I.V."/>
            <person name="Lareau L.F."/>
            <person name="Lazarevic D."/>
            <person name="Lipovich L."/>
            <person name="Liu J."/>
            <person name="Liuni S."/>
            <person name="McWilliam S."/>
            <person name="Madan Babu M."/>
            <person name="Madera M."/>
            <person name="Marchionni L."/>
            <person name="Matsuda H."/>
            <person name="Matsuzawa S."/>
            <person name="Miki H."/>
            <person name="Mignone F."/>
            <person name="Miyake S."/>
            <person name="Morris K."/>
            <person name="Mottagui-Tabar S."/>
            <person name="Mulder N."/>
            <person name="Nakano N."/>
            <person name="Nakauchi H."/>
            <person name="Ng P."/>
            <person name="Nilsson R."/>
            <person name="Nishiguchi S."/>
            <person name="Nishikawa S."/>
            <person name="Nori F."/>
            <person name="Ohara O."/>
            <person name="Okazaki Y."/>
            <person name="Orlando V."/>
            <person name="Pang K.C."/>
            <person name="Pavan W.J."/>
            <person name="Pavesi G."/>
            <person name="Pesole G."/>
            <person name="Petrovsky N."/>
            <person name="Piazza S."/>
            <person name="Reed J."/>
            <person name="Reid J.F."/>
            <person name="Ring B.Z."/>
            <person name="Ringwald M."/>
            <person name="Rost B."/>
            <person name="Ruan Y."/>
            <person name="Salzberg S.L."/>
            <person name="Sandelin A."/>
            <person name="Schneider C."/>
            <person name="Schoenbach C."/>
            <person name="Sekiguchi K."/>
            <person name="Semple C.A."/>
            <person name="Seno S."/>
            <person name="Sessa L."/>
            <person name="Sheng Y."/>
            <person name="Shibata Y."/>
            <person name="Shimada H."/>
            <person name="Shimada K."/>
            <person name="Silva D."/>
            <person name="Sinclair B."/>
            <person name="Sperling S."/>
            <person name="Stupka E."/>
            <person name="Sugiura K."/>
            <person name="Sultana R."/>
            <person name="Takenaka Y."/>
            <person name="Taki K."/>
            <person name="Tammoja K."/>
            <person name="Tan S.L."/>
            <person name="Tang S."/>
            <person name="Taylor M.S."/>
            <person name="Tegner J."/>
            <person name="Teichmann S.A."/>
            <person name="Ueda H.R."/>
            <person name="van Nimwegen E."/>
            <person name="Verardo R."/>
            <person name="Wei C.L."/>
            <person name="Yagi K."/>
            <person name="Yamanishi H."/>
            <person name="Zabarovsky E."/>
            <person name="Zhu S."/>
            <person name="Zimmer A."/>
            <person name="Hide W."/>
            <person name="Bult C."/>
            <person name="Grimmond S.M."/>
            <person name="Teasdale R.D."/>
            <person name="Liu E.T."/>
            <person name="Brusic V."/>
            <person name="Quackenbush J."/>
            <person name="Wahlestedt C."/>
            <person name="Mattick J.S."/>
            <person name="Hume D.A."/>
            <person name="Kai C."/>
            <person name="Sasaki D."/>
            <person name="Tomaru Y."/>
            <person name="Fukuda S."/>
            <person name="Kanamori-Katayama M."/>
            <person name="Suzuki M."/>
            <person name="Aoki J."/>
            <person name="Arakawa T."/>
            <person name="Iida J."/>
            <person name="Imamura K."/>
            <person name="Itoh M."/>
            <person name="Kato T."/>
            <person name="Kawaji H."/>
            <person name="Kawagashira N."/>
            <person name="Kawashima T."/>
            <person name="Kojima M."/>
            <person name="Kondo S."/>
            <person name="Konno H."/>
            <person name="Nakano K."/>
            <person name="Ninomiya N."/>
            <person name="Nishio T."/>
            <person name="Okada M."/>
            <person name="Plessy C."/>
            <person name="Shibata K."/>
            <person name="Shiraki T."/>
            <person name="Suzuki S."/>
            <person name="Tagami M."/>
            <person name="Waki K."/>
            <person name="Watahiki A."/>
            <person name="Okamura-Oho Y."/>
            <person name="Suzuki H."/>
            <person name="Kawai J."/>
            <person name="Hayashizaki Y."/>
        </authorList>
    </citation>
    <scope>NUCLEOTIDE SEQUENCE [LARGE SCALE MRNA]</scope>
    <source>
        <strain>C57BL/6J</strain>
        <tissue>Placenta</tissue>
    </source>
</reference>
<reference key="3">
    <citation type="journal article" date="2004" name="Genome Res.">
        <title>The status, quality, and expansion of the NIH full-length cDNA project: the Mammalian Gene Collection (MGC).</title>
        <authorList>
            <consortium name="The MGC Project Team"/>
        </authorList>
    </citation>
    <scope>NUCLEOTIDE SEQUENCE [LARGE SCALE MRNA]</scope>
</reference>
<reference key="4">
    <citation type="journal article" date="2005" name="J. Immunol.">
        <title>The nuclear IkappaB protein IkappaBNS selectively inhibits lipopolysaccharide-induced IL-6 production in macrophages of the colonic lamina propria.</title>
        <authorList>
            <person name="Hirotani T."/>
            <person name="Lee P.Y."/>
            <person name="Kuwata H."/>
            <person name="Yamamoto M."/>
            <person name="Matsumoto M."/>
            <person name="Kawase I."/>
            <person name="Akira S."/>
            <person name="Takeda K."/>
        </authorList>
    </citation>
    <scope>FUNCTION</scope>
    <scope>INDUCTION BY IL-10 AND LPS</scope>
</reference>
<reference key="5">
    <citation type="journal article" date="2006" name="Blood">
        <title>Regulatory dendritic cells act as regulators of acute lethal systemic inflammatory response.</title>
        <authorList>
            <person name="Fujita S."/>
            <person name="Seino K."/>
            <person name="Sato K."/>
            <person name="Sato Y."/>
            <person name="Eizumi K."/>
            <person name="Yamashita N."/>
            <person name="Taniguchi M."/>
            <person name="Sato K."/>
        </authorList>
    </citation>
    <scope>FUNCTION</scope>
    <scope>TISSUE SPECIFICITY</scope>
</reference>
<reference key="6">
    <citation type="journal article" date="2006" name="Immunity">
        <title>IkappaBNS inhibits induction of a subset of Toll-like receptor-dependent genes and limits inflammation.</title>
        <authorList>
            <person name="Kuwata H."/>
            <person name="Matsumoto M."/>
            <person name="Atarashi K."/>
            <person name="Morishita H."/>
            <person name="Hirotani T."/>
            <person name="Koga R."/>
            <person name="Takeda K."/>
        </authorList>
    </citation>
    <scope>FUNCTION</scope>
    <scope>DISRUPTION PHENOTYPE</scope>
</reference>
<reference key="7">
    <citation type="journal article" date="2007" name="J. Immunol.">
        <title>Functional role for I kappa BNS in T cell cytokine regulation as revealed by targeted gene disruption.</title>
        <authorList>
            <person name="Touma M."/>
            <person name="Antonini V."/>
            <person name="Kumar M."/>
            <person name="Osborn S.L."/>
            <person name="Bobenchik A.M."/>
            <person name="Keskin D.B."/>
            <person name="Connolly J.E."/>
            <person name="Grusby M.J."/>
            <person name="Reinherz E.L."/>
            <person name="Clayton L.K."/>
        </authorList>
    </citation>
    <scope>FUNCTION</scope>
    <scope>DISRUPTION PHENOTYPE</scope>
</reference>
<reference key="8">
    <citation type="journal article" date="2014" name="Nat. Immunol.">
        <title>Cleavage of roquin and regnase-1 by the paracaspase MALT1 releases their cooperatively repressed targets to promote T(H)17 differentiation.</title>
        <authorList>
            <person name="Jeltsch K.M."/>
            <person name="Hu D."/>
            <person name="Brenner S."/>
            <person name="Zoeller J."/>
            <person name="Heinz G.A."/>
            <person name="Nagel D."/>
            <person name="Vogel K.U."/>
            <person name="Rehage N."/>
            <person name="Warth S.C."/>
            <person name="Edelmann S.L."/>
            <person name="Gloury R."/>
            <person name="Martin N."/>
            <person name="Lohs C."/>
            <person name="Lech M."/>
            <person name="Stehklein J.E."/>
            <person name="Geerlof A."/>
            <person name="Kremmer E."/>
            <person name="Weber A."/>
            <person name="Anders H.J."/>
            <person name="Schmitz I."/>
            <person name="Schmidt-Supprian M."/>
            <person name="Fu M."/>
            <person name="Holtmann H."/>
            <person name="Krappmann D."/>
            <person name="Ruland J."/>
            <person name="Kallies A."/>
            <person name="Heikenwalder M."/>
            <person name="Heissmeyer V."/>
        </authorList>
    </citation>
    <scope>FUNCTION</scope>
</reference>
<name>IKBD_MOUSE</name>
<dbReference type="EMBL" id="AY078069">
    <property type="protein sequence ID" value="AAL79957.1"/>
    <property type="molecule type" value="mRNA"/>
</dbReference>
<dbReference type="EMBL" id="AK167356">
    <property type="protein sequence ID" value="BAE39455.1"/>
    <property type="status" value="ALT_FRAME"/>
    <property type="molecule type" value="mRNA"/>
</dbReference>
<dbReference type="EMBL" id="BC110633">
    <property type="protein sequence ID" value="AAI10634.1"/>
    <property type="molecule type" value="mRNA"/>
</dbReference>
<dbReference type="CCDS" id="CCDS21091.1"/>
<dbReference type="RefSeq" id="NP_001347836.1">
    <property type="nucleotide sequence ID" value="NM_001360907.2"/>
</dbReference>
<dbReference type="RefSeq" id="NP_001408441.1">
    <property type="nucleotide sequence ID" value="NM_001421512.1"/>
</dbReference>
<dbReference type="RefSeq" id="NP_742154.1">
    <property type="nucleotide sequence ID" value="NM_172142.5"/>
</dbReference>
<dbReference type="RefSeq" id="XP_006540016.1">
    <property type="nucleotide sequence ID" value="XM_006539953.3"/>
</dbReference>
<dbReference type="SMR" id="Q2TB02"/>
<dbReference type="FunCoup" id="Q2TB02">
    <property type="interactions" value="814"/>
</dbReference>
<dbReference type="IntAct" id="Q2TB02">
    <property type="interactions" value="1"/>
</dbReference>
<dbReference type="STRING" id="10090.ENSMUSP00000042317"/>
<dbReference type="iPTMnet" id="Q2TB02"/>
<dbReference type="PhosphoSitePlus" id="Q2TB02"/>
<dbReference type="PaxDb" id="10090-ENSMUSP00000042317"/>
<dbReference type="ProteomicsDB" id="269387"/>
<dbReference type="Antibodypedia" id="48023">
    <property type="antibodies" value="141 antibodies from 18 providers"/>
</dbReference>
<dbReference type="Ensembl" id="ENSMUST00000046177.9">
    <property type="protein sequence ID" value="ENSMUSP00000042317.9"/>
    <property type="gene ID" value="ENSMUSG00000036931.16"/>
</dbReference>
<dbReference type="Ensembl" id="ENSMUST00000108175.8">
    <property type="protein sequence ID" value="ENSMUSP00000103810.2"/>
    <property type="gene ID" value="ENSMUSG00000036931.16"/>
</dbReference>
<dbReference type="GeneID" id="243910"/>
<dbReference type="KEGG" id="mmu:243910"/>
<dbReference type="UCSC" id="uc009gei.1">
    <property type="organism name" value="mouse"/>
</dbReference>
<dbReference type="AGR" id="MGI:3041243"/>
<dbReference type="CTD" id="84807"/>
<dbReference type="MGI" id="MGI:3041243">
    <property type="gene designation" value="Nfkbid"/>
</dbReference>
<dbReference type="VEuPathDB" id="HostDB:ENSMUSG00000036931"/>
<dbReference type="eggNOG" id="KOG0504">
    <property type="taxonomic scope" value="Eukaryota"/>
</dbReference>
<dbReference type="GeneTree" id="ENSGT00940000153695"/>
<dbReference type="HOGENOM" id="CLU_046801_0_0_1"/>
<dbReference type="InParanoid" id="Q2TB02"/>
<dbReference type="PhylomeDB" id="Q2TB02"/>
<dbReference type="TreeFam" id="TF330224"/>
<dbReference type="BioGRID-ORCS" id="243910">
    <property type="hits" value="2 hits in 78 CRISPR screens"/>
</dbReference>
<dbReference type="PRO" id="PR:Q2TB02"/>
<dbReference type="Proteomes" id="UP000000589">
    <property type="component" value="Chromosome 7"/>
</dbReference>
<dbReference type="RNAct" id="Q2TB02">
    <property type="molecule type" value="protein"/>
</dbReference>
<dbReference type="Bgee" id="ENSMUSG00000036931">
    <property type="expression patterns" value="Expressed in granulocyte and 68 other cell types or tissues"/>
</dbReference>
<dbReference type="ExpressionAtlas" id="Q2TB02">
    <property type="expression patterns" value="baseline and differential"/>
</dbReference>
<dbReference type="GO" id="GO:0005634">
    <property type="term" value="C:nucleus"/>
    <property type="evidence" value="ECO:0000314"/>
    <property type="project" value="MGI"/>
</dbReference>
<dbReference type="GO" id="GO:0051059">
    <property type="term" value="F:NF-kappaB binding"/>
    <property type="evidence" value="ECO:0000353"/>
    <property type="project" value="MGI"/>
</dbReference>
<dbReference type="GO" id="GO:0006954">
    <property type="term" value="P:inflammatory response"/>
    <property type="evidence" value="ECO:0007669"/>
    <property type="project" value="UniProtKB-KW"/>
</dbReference>
<dbReference type="GO" id="GO:0043124">
    <property type="term" value="P:negative regulation of canonical NF-kappaB signal transduction"/>
    <property type="evidence" value="ECO:0000314"/>
    <property type="project" value="MGI"/>
</dbReference>
<dbReference type="GO" id="GO:0033085">
    <property type="term" value="P:negative regulation of T cell differentiation in thymus"/>
    <property type="evidence" value="ECO:0000314"/>
    <property type="project" value="MGI"/>
</dbReference>
<dbReference type="GO" id="GO:2000321">
    <property type="term" value="P:positive regulation of T-helper 17 cell differentiation"/>
    <property type="evidence" value="ECO:0000315"/>
    <property type="project" value="UniProtKB"/>
</dbReference>
<dbReference type="GO" id="GO:0070245">
    <property type="term" value="P:positive regulation of thymocyte apoptotic process"/>
    <property type="evidence" value="ECO:0000314"/>
    <property type="project" value="MGI"/>
</dbReference>
<dbReference type="GO" id="GO:0033077">
    <property type="term" value="P:T cell differentiation in thymus"/>
    <property type="evidence" value="ECO:0000314"/>
    <property type="project" value="MGI"/>
</dbReference>
<dbReference type="GO" id="GO:0050852">
    <property type="term" value="P:T cell receptor signaling pathway"/>
    <property type="evidence" value="ECO:0000315"/>
    <property type="project" value="UniProtKB"/>
</dbReference>
<dbReference type="GO" id="GO:0070242">
    <property type="term" value="P:thymocyte apoptotic process"/>
    <property type="evidence" value="ECO:0000314"/>
    <property type="project" value="MGI"/>
</dbReference>
<dbReference type="FunFam" id="1.25.40.20:FF:000091">
    <property type="entry name" value="NF-kappa-B inhibitor delta"/>
    <property type="match status" value="1"/>
</dbReference>
<dbReference type="Gene3D" id="1.25.40.20">
    <property type="entry name" value="Ankyrin repeat-containing domain"/>
    <property type="match status" value="1"/>
</dbReference>
<dbReference type="InterPro" id="IPR002110">
    <property type="entry name" value="Ankyrin_rpt"/>
</dbReference>
<dbReference type="InterPro" id="IPR036770">
    <property type="entry name" value="Ankyrin_rpt-contain_sf"/>
</dbReference>
<dbReference type="PANTHER" id="PTHR24124">
    <property type="entry name" value="ANKYRIN REPEAT FAMILY A"/>
    <property type="match status" value="1"/>
</dbReference>
<dbReference type="PANTHER" id="PTHR24124:SF7">
    <property type="entry name" value="NF-KAPPA-B INHIBITOR DELTA"/>
    <property type="match status" value="1"/>
</dbReference>
<dbReference type="Pfam" id="PF12796">
    <property type="entry name" value="Ank_2"/>
    <property type="match status" value="2"/>
</dbReference>
<dbReference type="SMART" id="SM00248">
    <property type="entry name" value="ANK"/>
    <property type="match status" value="5"/>
</dbReference>
<dbReference type="SUPFAM" id="SSF48403">
    <property type="entry name" value="Ankyrin repeat"/>
    <property type="match status" value="1"/>
</dbReference>
<dbReference type="PROSITE" id="PS50297">
    <property type="entry name" value="ANK_REP_REGION"/>
    <property type="match status" value="1"/>
</dbReference>
<dbReference type="PROSITE" id="PS50088">
    <property type="entry name" value="ANK_REPEAT"/>
    <property type="match status" value="3"/>
</dbReference>
<keyword id="KW-0040">ANK repeat</keyword>
<keyword id="KW-0395">Inflammatory response</keyword>
<keyword id="KW-0539">Nucleus</keyword>
<keyword id="KW-1185">Reference proteome</keyword>
<keyword id="KW-0677">Repeat</keyword>
<proteinExistence type="evidence at protein level"/>
<sequence length="327" mass="34942">MEDSLDTRLYPEPSLSQVGSWRVSSLPSGSPQLPSPTGPSLETARAHILALGPQQLLAQDEEGDTLLHLFAARGLRWAAYAAAEVLQMYRQLDIREHKGKTPLLVAAAANQPLIVEDLLSLGAEPNATDHQGRSVLHVAATYGLPGVLSAVFKSGIQVDLEARDFEGLTPLHTAVLALNAAMLPASVCPRMQNSQARDRLTCVQMLLQMGASHTSQEIKSNKTILHLAVQAANPTLVQLLLGLPRGDLRAFVNMKAHGNTALHMAAALPPGPPQEAIVRHLLAAGADPTLRNLENEQPVHLLRPGPGPEGLRQLLKRSRTAPPGLSS</sequence>
<evidence type="ECO:0000256" key="1">
    <source>
        <dbReference type="SAM" id="MobiDB-lite"/>
    </source>
</evidence>
<evidence type="ECO:0000269" key="2">
    <source>
    </source>
</evidence>
<evidence type="ECO:0000269" key="3">
    <source>
    </source>
</evidence>
<evidence type="ECO:0000269" key="4">
    <source>
    </source>
</evidence>
<evidence type="ECO:0000269" key="5">
    <source>
    </source>
</evidence>
<evidence type="ECO:0000269" key="6">
    <source>
    </source>
</evidence>
<evidence type="ECO:0000269" key="7">
    <source>
    </source>
</evidence>
<evidence type="ECO:0000305" key="8"/>
<protein>
    <recommendedName>
        <fullName>NF-kappa-B inhibitor delta</fullName>
    </recommendedName>
    <alternativeName>
        <fullName>I-kappa-B-delta</fullName>
        <shortName>IkB-delta</shortName>
        <shortName>IkappaBdelta</shortName>
    </alternativeName>
    <alternativeName>
        <fullName>IkappaBNS</fullName>
    </alternativeName>
</protein>
<accession>Q2TB02</accession>
<accession>Q3TJP0</accession>
<accession>Q8CIW1</accession>